<sequence>MLKPLGDRVVVRFDDEKEQTVGGFVLAGTHKESTRKATVLAVSETGVRTITGDSVLPSVSVGQEVLVENGHDLEVTVDDEKVSIIRESDIIAIVTK</sequence>
<gene>
    <name evidence="1" type="primary">groES</name>
    <name evidence="1" type="synonym">groS</name>
    <name type="ordered locus">Spy49_1716c</name>
</gene>
<comment type="function">
    <text evidence="1">Together with the chaperonin GroEL, plays an essential role in assisting protein folding. The GroEL-GroES system forms a nano-cage that allows encapsulation of the non-native substrate proteins and provides a physical environment optimized to promote and accelerate protein folding. GroES binds to the apical surface of the GroEL ring, thereby capping the opening of the GroEL channel.</text>
</comment>
<comment type="subunit">
    <text evidence="1">Heptamer of 7 subunits arranged in a ring. Interacts with the chaperonin GroEL.</text>
</comment>
<comment type="subcellular location">
    <subcellularLocation>
        <location evidence="1">Cytoplasm</location>
    </subcellularLocation>
</comment>
<comment type="similarity">
    <text evidence="1">Belongs to the GroES chaperonin family.</text>
</comment>
<evidence type="ECO:0000255" key="1">
    <source>
        <dbReference type="HAMAP-Rule" id="MF_00580"/>
    </source>
</evidence>
<accession>B5XIW8</accession>
<organism>
    <name type="scientific">Streptococcus pyogenes serotype M49 (strain NZ131)</name>
    <dbReference type="NCBI Taxonomy" id="471876"/>
    <lineage>
        <taxon>Bacteria</taxon>
        <taxon>Bacillati</taxon>
        <taxon>Bacillota</taxon>
        <taxon>Bacilli</taxon>
        <taxon>Lactobacillales</taxon>
        <taxon>Streptococcaceae</taxon>
        <taxon>Streptococcus</taxon>
    </lineage>
</organism>
<keyword id="KW-0143">Chaperone</keyword>
<keyword id="KW-0963">Cytoplasm</keyword>
<keyword id="KW-0346">Stress response</keyword>
<protein>
    <recommendedName>
        <fullName evidence="1">Co-chaperonin GroES</fullName>
    </recommendedName>
    <alternativeName>
        <fullName evidence="1">10 kDa chaperonin</fullName>
    </alternativeName>
    <alternativeName>
        <fullName evidence="1">Chaperonin-10</fullName>
        <shortName evidence="1">Cpn10</shortName>
    </alternativeName>
</protein>
<name>CH10_STRPZ</name>
<reference key="1">
    <citation type="journal article" date="2008" name="J. Bacteriol.">
        <title>Genome sequence of a nephritogenic and highly transformable M49 strain of Streptococcus pyogenes.</title>
        <authorList>
            <person name="McShan W.M."/>
            <person name="Ferretti J.J."/>
            <person name="Karasawa T."/>
            <person name="Suvorov A.N."/>
            <person name="Lin S."/>
            <person name="Qin B."/>
            <person name="Jia H."/>
            <person name="Kenton S."/>
            <person name="Najar F."/>
            <person name="Wu H."/>
            <person name="Scott J."/>
            <person name="Roe B.A."/>
            <person name="Savic D.J."/>
        </authorList>
    </citation>
    <scope>NUCLEOTIDE SEQUENCE [LARGE SCALE GENOMIC DNA]</scope>
    <source>
        <strain>NZ131</strain>
    </source>
</reference>
<proteinExistence type="inferred from homology"/>
<feature type="chain" id="PRO_1000129715" description="Co-chaperonin GroES">
    <location>
        <begin position="1"/>
        <end position="96"/>
    </location>
</feature>
<dbReference type="EMBL" id="CP000829">
    <property type="protein sequence ID" value="ACI61967.1"/>
    <property type="molecule type" value="Genomic_DNA"/>
</dbReference>
<dbReference type="SMR" id="B5XIW8"/>
<dbReference type="KEGG" id="soz:Spy49_1716c"/>
<dbReference type="HOGENOM" id="CLU_132825_1_2_9"/>
<dbReference type="Proteomes" id="UP000001039">
    <property type="component" value="Chromosome"/>
</dbReference>
<dbReference type="GO" id="GO:0005737">
    <property type="term" value="C:cytoplasm"/>
    <property type="evidence" value="ECO:0007669"/>
    <property type="project" value="UniProtKB-SubCell"/>
</dbReference>
<dbReference type="GO" id="GO:0005524">
    <property type="term" value="F:ATP binding"/>
    <property type="evidence" value="ECO:0007669"/>
    <property type="project" value="InterPro"/>
</dbReference>
<dbReference type="GO" id="GO:0046872">
    <property type="term" value="F:metal ion binding"/>
    <property type="evidence" value="ECO:0007669"/>
    <property type="project" value="TreeGrafter"/>
</dbReference>
<dbReference type="GO" id="GO:0044183">
    <property type="term" value="F:protein folding chaperone"/>
    <property type="evidence" value="ECO:0007669"/>
    <property type="project" value="InterPro"/>
</dbReference>
<dbReference type="GO" id="GO:0051087">
    <property type="term" value="F:protein-folding chaperone binding"/>
    <property type="evidence" value="ECO:0007669"/>
    <property type="project" value="TreeGrafter"/>
</dbReference>
<dbReference type="GO" id="GO:0051082">
    <property type="term" value="F:unfolded protein binding"/>
    <property type="evidence" value="ECO:0007669"/>
    <property type="project" value="TreeGrafter"/>
</dbReference>
<dbReference type="GO" id="GO:0051085">
    <property type="term" value="P:chaperone cofactor-dependent protein refolding"/>
    <property type="evidence" value="ECO:0007669"/>
    <property type="project" value="TreeGrafter"/>
</dbReference>
<dbReference type="CDD" id="cd00320">
    <property type="entry name" value="cpn10"/>
    <property type="match status" value="1"/>
</dbReference>
<dbReference type="FunFam" id="2.30.33.40:FF:000001">
    <property type="entry name" value="10 kDa chaperonin"/>
    <property type="match status" value="1"/>
</dbReference>
<dbReference type="Gene3D" id="2.30.33.40">
    <property type="entry name" value="GroES chaperonin"/>
    <property type="match status" value="1"/>
</dbReference>
<dbReference type="HAMAP" id="MF_00580">
    <property type="entry name" value="CH10"/>
    <property type="match status" value="1"/>
</dbReference>
<dbReference type="InterPro" id="IPR020818">
    <property type="entry name" value="Chaperonin_GroES"/>
</dbReference>
<dbReference type="InterPro" id="IPR037124">
    <property type="entry name" value="Chaperonin_GroES_sf"/>
</dbReference>
<dbReference type="InterPro" id="IPR018369">
    <property type="entry name" value="Chaprnonin_Cpn10_CS"/>
</dbReference>
<dbReference type="InterPro" id="IPR011032">
    <property type="entry name" value="GroES-like_sf"/>
</dbReference>
<dbReference type="NCBIfam" id="NF001528">
    <property type="entry name" value="PRK00364.1-4"/>
    <property type="match status" value="1"/>
</dbReference>
<dbReference type="PANTHER" id="PTHR10772">
    <property type="entry name" value="10 KDA HEAT SHOCK PROTEIN"/>
    <property type="match status" value="1"/>
</dbReference>
<dbReference type="PANTHER" id="PTHR10772:SF58">
    <property type="entry name" value="CO-CHAPERONIN GROES"/>
    <property type="match status" value="1"/>
</dbReference>
<dbReference type="Pfam" id="PF00166">
    <property type="entry name" value="Cpn10"/>
    <property type="match status" value="1"/>
</dbReference>
<dbReference type="PRINTS" id="PR00297">
    <property type="entry name" value="CHAPERONIN10"/>
</dbReference>
<dbReference type="SMART" id="SM00883">
    <property type="entry name" value="Cpn10"/>
    <property type="match status" value="1"/>
</dbReference>
<dbReference type="SUPFAM" id="SSF50129">
    <property type="entry name" value="GroES-like"/>
    <property type="match status" value="1"/>
</dbReference>
<dbReference type="PROSITE" id="PS00681">
    <property type="entry name" value="CHAPERONINS_CPN10"/>
    <property type="match status" value="1"/>
</dbReference>